<dbReference type="EC" id="2.2.1.7" evidence="1"/>
<dbReference type="EMBL" id="AE017126">
    <property type="protein sequence ID" value="AAP99972.1"/>
    <property type="molecule type" value="Genomic_DNA"/>
</dbReference>
<dbReference type="RefSeq" id="NP_875320.1">
    <property type="nucleotide sequence ID" value="NC_005042.1"/>
</dbReference>
<dbReference type="RefSeq" id="WP_011125080.1">
    <property type="nucleotide sequence ID" value="NC_005042.1"/>
</dbReference>
<dbReference type="SMR" id="Q7VC14"/>
<dbReference type="STRING" id="167539.Pro_0928"/>
<dbReference type="EnsemblBacteria" id="AAP99972">
    <property type="protein sequence ID" value="AAP99972"/>
    <property type="gene ID" value="Pro_0928"/>
</dbReference>
<dbReference type="KEGG" id="pma:Pro_0928"/>
<dbReference type="PATRIC" id="fig|167539.5.peg.976"/>
<dbReference type="eggNOG" id="COG1154">
    <property type="taxonomic scope" value="Bacteria"/>
</dbReference>
<dbReference type="HOGENOM" id="CLU_009227_1_4_3"/>
<dbReference type="OrthoDB" id="9803371at2"/>
<dbReference type="UniPathway" id="UPA00064">
    <property type="reaction ID" value="UER00091"/>
</dbReference>
<dbReference type="Proteomes" id="UP000001420">
    <property type="component" value="Chromosome"/>
</dbReference>
<dbReference type="GO" id="GO:0005829">
    <property type="term" value="C:cytosol"/>
    <property type="evidence" value="ECO:0007669"/>
    <property type="project" value="TreeGrafter"/>
</dbReference>
<dbReference type="GO" id="GO:0008661">
    <property type="term" value="F:1-deoxy-D-xylulose-5-phosphate synthase activity"/>
    <property type="evidence" value="ECO:0007669"/>
    <property type="project" value="UniProtKB-UniRule"/>
</dbReference>
<dbReference type="GO" id="GO:0000287">
    <property type="term" value="F:magnesium ion binding"/>
    <property type="evidence" value="ECO:0007669"/>
    <property type="project" value="UniProtKB-UniRule"/>
</dbReference>
<dbReference type="GO" id="GO:0030976">
    <property type="term" value="F:thiamine pyrophosphate binding"/>
    <property type="evidence" value="ECO:0007669"/>
    <property type="project" value="UniProtKB-UniRule"/>
</dbReference>
<dbReference type="GO" id="GO:0052865">
    <property type="term" value="P:1-deoxy-D-xylulose 5-phosphate biosynthetic process"/>
    <property type="evidence" value="ECO:0007669"/>
    <property type="project" value="UniProtKB-UniPathway"/>
</dbReference>
<dbReference type="GO" id="GO:0019288">
    <property type="term" value="P:isopentenyl diphosphate biosynthetic process, methylerythritol 4-phosphate pathway"/>
    <property type="evidence" value="ECO:0007669"/>
    <property type="project" value="TreeGrafter"/>
</dbReference>
<dbReference type="GO" id="GO:0016114">
    <property type="term" value="P:terpenoid biosynthetic process"/>
    <property type="evidence" value="ECO:0007669"/>
    <property type="project" value="UniProtKB-UniRule"/>
</dbReference>
<dbReference type="GO" id="GO:0009228">
    <property type="term" value="P:thiamine biosynthetic process"/>
    <property type="evidence" value="ECO:0007669"/>
    <property type="project" value="UniProtKB-UniRule"/>
</dbReference>
<dbReference type="CDD" id="cd02007">
    <property type="entry name" value="TPP_DXS"/>
    <property type="match status" value="1"/>
</dbReference>
<dbReference type="CDD" id="cd07033">
    <property type="entry name" value="TPP_PYR_DXS_TK_like"/>
    <property type="match status" value="1"/>
</dbReference>
<dbReference type="FunFam" id="3.40.50.920:FF:000002">
    <property type="entry name" value="1-deoxy-D-xylulose-5-phosphate synthase"/>
    <property type="match status" value="1"/>
</dbReference>
<dbReference type="FunFam" id="3.40.50.970:FF:000005">
    <property type="entry name" value="1-deoxy-D-xylulose-5-phosphate synthase"/>
    <property type="match status" value="1"/>
</dbReference>
<dbReference type="Gene3D" id="3.40.50.920">
    <property type="match status" value="1"/>
</dbReference>
<dbReference type="Gene3D" id="3.40.50.970">
    <property type="match status" value="2"/>
</dbReference>
<dbReference type="HAMAP" id="MF_00315">
    <property type="entry name" value="DXP_synth"/>
    <property type="match status" value="1"/>
</dbReference>
<dbReference type="InterPro" id="IPR005477">
    <property type="entry name" value="Dxylulose-5-P_synthase"/>
</dbReference>
<dbReference type="InterPro" id="IPR029061">
    <property type="entry name" value="THDP-binding"/>
</dbReference>
<dbReference type="InterPro" id="IPR009014">
    <property type="entry name" value="Transketo_C/PFOR_II"/>
</dbReference>
<dbReference type="InterPro" id="IPR005475">
    <property type="entry name" value="Transketolase-like_Pyr-bd"/>
</dbReference>
<dbReference type="InterPro" id="IPR020826">
    <property type="entry name" value="Transketolase_BS"/>
</dbReference>
<dbReference type="InterPro" id="IPR033248">
    <property type="entry name" value="Transketolase_C"/>
</dbReference>
<dbReference type="InterPro" id="IPR049557">
    <property type="entry name" value="Transketolase_CS"/>
</dbReference>
<dbReference type="NCBIfam" id="TIGR00204">
    <property type="entry name" value="dxs"/>
    <property type="match status" value="1"/>
</dbReference>
<dbReference type="NCBIfam" id="NF003933">
    <property type="entry name" value="PRK05444.2-2"/>
    <property type="match status" value="1"/>
</dbReference>
<dbReference type="PANTHER" id="PTHR43322">
    <property type="entry name" value="1-D-DEOXYXYLULOSE 5-PHOSPHATE SYNTHASE-RELATED"/>
    <property type="match status" value="1"/>
</dbReference>
<dbReference type="PANTHER" id="PTHR43322:SF5">
    <property type="entry name" value="1-DEOXY-D-XYLULOSE-5-PHOSPHATE SYNTHASE, CHLOROPLASTIC"/>
    <property type="match status" value="1"/>
</dbReference>
<dbReference type="Pfam" id="PF13292">
    <property type="entry name" value="DXP_synthase_N"/>
    <property type="match status" value="1"/>
</dbReference>
<dbReference type="Pfam" id="PF02779">
    <property type="entry name" value="Transket_pyr"/>
    <property type="match status" value="1"/>
</dbReference>
<dbReference type="Pfam" id="PF02780">
    <property type="entry name" value="Transketolase_C"/>
    <property type="match status" value="1"/>
</dbReference>
<dbReference type="SMART" id="SM00861">
    <property type="entry name" value="Transket_pyr"/>
    <property type="match status" value="1"/>
</dbReference>
<dbReference type="SUPFAM" id="SSF52518">
    <property type="entry name" value="Thiamin diphosphate-binding fold (THDP-binding)"/>
    <property type="match status" value="2"/>
</dbReference>
<dbReference type="SUPFAM" id="SSF52922">
    <property type="entry name" value="TK C-terminal domain-like"/>
    <property type="match status" value="1"/>
</dbReference>
<dbReference type="PROSITE" id="PS00801">
    <property type="entry name" value="TRANSKETOLASE_1"/>
    <property type="match status" value="1"/>
</dbReference>
<dbReference type="PROSITE" id="PS00802">
    <property type="entry name" value="TRANSKETOLASE_2"/>
    <property type="match status" value="1"/>
</dbReference>
<protein>
    <recommendedName>
        <fullName evidence="1">1-deoxy-D-xylulose-5-phosphate synthase</fullName>
        <ecNumber evidence="1">2.2.1.7</ecNumber>
    </recommendedName>
    <alternativeName>
        <fullName evidence="1">1-deoxyxylulose-5-phosphate synthase</fullName>
        <shortName evidence="1">DXP synthase</shortName>
        <shortName evidence="1">DXPS</shortName>
    </alternativeName>
</protein>
<organism>
    <name type="scientific">Prochlorococcus marinus (strain SARG / CCMP1375 / SS120)</name>
    <dbReference type="NCBI Taxonomy" id="167539"/>
    <lineage>
        <taxon>Bacteria</taxon>
        <taxon>Bacillati</taxon>
        <taxon>Cyanobacteriota</taxon>
        <taxon>Cyanophyceae</taxon>
        <taxon>Synechococcales</taxon>
        <taxon>Prochlorococcaceae</taxon>
        <taxon>Prochlorococcus</taxon>
    </lineage>
</organism>
<keyword id="KW-0414">Isoprene biosynthesis</keyword>
<keyword id="KW-0460">Magnesium</keyword>
<keyword id="KW-0479">Metal-binding</keyword>
<keyword id="KW-1185">Reference proteome</keyword>
<keyword id="KW-0784">Thiamine biosynthesis</keyword>
<keyword id="KW-0786">Thiamine pyrophosphate</keyword>
<keyword id="KW-0808">Transferase</keyword>
<gene>
    <name evidence="1" type="primary">dxs</name>
    <name type="ordered locus">Pro_0928</name>
</gene>
<comment type="function">
    <text evidence="1">Catalyzes the acyloin condensation reaction between C atoms 2 and 3 of pyruvate and glyceraldehyde 3-phosphate to yield 1-deoxy-D-xylulose-5-phosphate (DXP).</text>
</comment>
<comment type="catalytic activity">
    <reaction evidence="1">
        <text>D-glyceraldehyde 3-phosphate + pyruvate + H(+) = 1-deoxy-D-xylulose 5-phosphate + CO2</text>
        <dbReference type="Rhea" id="RHEA:12605"/>
        <dbReference type="ChEBI" id="CHEBI:15361"/>
        <dbReference type="ChEBI" id="CHEBI:15378"/>
        <dbReference type="ChEBI" id="CHEBI:16526"/>
        <dbReference type="ChEBI" id="CHEBI:57792"/>
        <dbReference type="ChEBI" id="CHEBI:59776"/>
        <dbReference type="EC" id="2.2.1.7"/>
    </reaction>
</comment>
<comment type="cofactor">
    <cofactor evidence="1">
        <name>Mg(2+)</name>
        <dbReference type="ChEBI" id="CHEBI:18420"/>
    </cofactor>
    <text evidence="1">Binds 1 Mg(2+) ion per subunit.</text>
</comment>
<comment type="cofactor">
    <cofactor evidence="1">
        <name>thiamine diphosphate</name>
        <dbReference type="ChEBI" id="CHEBI:58937"/>
    </cofactor>
    <text evidence="1">Binds 1 thiamine pyrophosphate per subunit.</text>
</comment>
<comment type="pathway">
    <text evidence="1">Metabolic intermediate biosynthesis; 1-deoxy-D-xylulose 5-phosphate biosynthesis; 1-deoxy-D-xylulose 5-phosphate from D-glyceraldehyde 3-phosphate and pyruvate: step 1/1.</text>
</comment>
<comment type="subunit">
    <text evidence="1">Homodimer.</text>
</comment>
<comment type="similarity">
    <text evidence="1">Belongs to the transketolase family. DXPS subfamily.</text>
</comment>
<reference key="1">
    <citation type="journal article" date="2003" name="Proc. Natl. Acad. Sci. U.S.A.">
        <title>Genome sequence of the cyanobacterium Prochlorococcus marinus SS120, a nearly minimal oxyphototrophic genome.</title>
        <authorList>
            <person name="Dufresne A."/>
            <person name="Salanoubat M."/>
            <person name="Partensky F."/>
            <person name="Artiguenave F."/>
            <person name="Axmann I.M."/>
            <person name="Barbe V."/>
            <person name="Duprat S."/>
            <person name="Galperin M.Y."/>
            <person name="Koonin E.V."/>
            <person name="Le Gall F."/>
            <person name="Makarova K.S."/>
            <person name="Ostrowski M."/>
            <person name="Oztas S."/>
            <person name="Robert C."/>
            <person name="Rogozin I.B."/>
            <person name="Scanlan D.J."/>
            <person name="Tandeau de Marsac N."/>
            <person name="Weissenbach J."/>
            <person name="Wincker P."/>
            <person name="Wolf Y.I."/>
            <person name="Hess W.R."/>
        </authorList>
    </citation>
    <scope>NUCLEOTIDE SEQUENCE [LARGE SCALE GENOMIC DNA]</scope>
    <source>
        <strain>SARG / CCMP1375 / SS120</strain>
    </source>
</reference>
<accession>Q7VC14</accession>
<proteinExistence type="inferred from homology"/>
<feature type="chain" id="PRO_0000189139" description="1-deoxy-D-xylulose-5-phosphate synthase">
    <location>
        <begin position="1"/>
        <end position="643"/>
    </location>
</feature>
<feature type="binding site" evidence="1">
    <location>
        <position position="72"/>
    </location>
    <ligand>
        <name>thiamine diphosphate</name>
        <dbReference type="ChEBI" id="CHEBI:58937"/>
    </ligand>
</feature>
<feature type="binding site" evidence="1">
    <location>
        <begin position="113"/>
        <end position="115"/>
    </location>
    <ligand>
        <name>thiamine diphosphate</name>
        <dbReference type="ChEBI" id="CHEBI:58937"/>
    </ligand>
</feature>
<feature type="binding site" evidence="1">
    <location>
        <position position="144"/>
    </location>
    <ligand>
        <name>Mg(2+)</name>
        <dbReference type="ChEBI" id="CHEBI:18420"/>
    </ligand>
</feature>
<feature type="binding site" evidence="1">
    <location>
        <begin position="145"/>
        <end position="146"/>
    </location>
    <ligand>
        <name>thiamine diphosphate</name>
        <dbReference type="ChEBI" id="CHEBI:58937"/>
    </ligand>
</feature>
<feature type="binding site" evidence="1">
    <location>
        <position position="174"/>
    </location>
    <ligand>
        <name>Mg(2+)</name>
        <dbReference type="ChEBI" id="CHEBI:18420"/>
    </ligand>
</feature>
<feature type="binding site" evidence="1">
    <location>
        <position position="174"/>
    </location>
    <ligand>
        <name>thiamine diphosphate</name>
        <dbReference type="ChEBI" id="CHEBI:58937"/>
    </ligand>
</feature>
<feature type="binding site" evidence="1">
    <location>
        <position position="287"/>
    </location>
    <ligand>
        <name>thiamine diphosphate</name>
        <dbReference type="ChEBI" id="CHEBI:58937"/>
    </ligand>
</feature>
<feature type="binding site" evidence="1">
    <location>
        <position position="370"/>
    </location>
    <ligand>
        <name>thiamine diphosphate</name>
        <dbReference type="ChEBI" id="CHEBI:58937"/>
    </ligand>
</feature>
<name>DXS_PROMA</name>
<evidence type="ECO:0000255" key="1">
    <source>
        <dbReference type="HAMAP-Rule" id="MF_00315"/>
    </source>
</evidence>
<sequence>MRLSDVSHPNQLHGLTTAQLEDVACQIRERHLQVVSTSGGHLGPGLGVVELTLALYQTLDLDHDKVVWDVGHQAYPHKLLTGRYGDFDSLRQQNGVAGYLKRSESSFDHFGAGHASTSISAALGMALARDRQGKDYKCVAVIGDGALTGGMALEAINHAGHLPSTPFLVVLNDNDMSISPPVGALSTHLNRMRHSAPIQFISDSVQEGVRNIPFIGKEIPQEIKSLTGSVKRLAVPKVGAVFEELGFTYMGPVDGHDIAQMTRTFQAAHRIGGPVLVHVATTKGKGYPYAEADQVGYHAQSAFDLTTGKSIPSKTPKPPSYSKVFGQTLVKICEQNSKVVGITAAMATGTGLDLLQKAIPDQYIDVGIAEQHAVTLAAGMACDGLRPVCAIYSTFLQRAFDQLIHDVGIQNLPVTFVMDRAGIVGADGPTHQGQYDISYLRSIPNFTVMAPKDEAELQRMLVTCLSHDGPTALRIPRGPGEGVTLMEEGWDPLKIGRGEILSEGSDLLIIAYGSMVAPAQKTALCLKESGISATVINARFLRPLDQGLIHPLARRIGKVVTMEEGTLLGGFGSAIVESFADQDIAVSTYRIGIPDKLVHHASPQQSKEELGLTPTAMADNIKKRFGWDNSDSLFVKNSNTSTI</sequence>